<evidence type="ECO:0000250" key="1">
    <source>
        <dbReference type="UniProtKB" id="P19440"/>
    </source>
</evidence>
<evidence type="ECO:0000250" key="2">
    <source>
        <dbReference type="UniProtKB" id="P36269"/>
    </source>
</evidence>
<evidence type="ECO:0000250" key="3">
    <source>
        <dbReference type="UniProtKB" id="Q9Z2A9"/>
    </source>
</evidence>
<evidence type="ECO:0000255" key="4"/>
<evidence type="ECO:0000269" key="5">
    <source>
    </source>
</evidence>
<evidence type="ECO:0000305" key="6"/>
<proteinExistence type="evidence at transcript level"/>
<dbReference type="EC" id="3.4.19.13" evidence="1"/>
<dbReference type="EC" id="2.3.2.2" evidence="1"/>
<dbReference type="EC" id="3.4.19.14" evidence="1"/>
<dbReference type="EMBL" id="U76252">
    <property type="protein sequence ID" value="AAC23546.1"/>
    <property type="molecule type" value="mRNA"/>
</dbReference>
<dbReference type="EMBL" id="BC087018">
    <property type="protein sequence ID" value="AAH87018.1"/>
    <property type="molecule type" value="mRNA"/>
</dbReference>
<dbReference type="RefSeq" id="NP_062108.2">
    <property type="nucleotide sequence ID" value="NM_019235.2"/>
</dbReference>
<dbReference type="SMR" id="Q9QWE9"/>
<dbReference type="FunCoup" id="Q9QWE9">
    <property type="interactions" value="118"/>
</dbReference>
<dbReference type="STRING" id="10116.ENSRNOP00000076289"/>
<dbReference type="MEROPS" id="T03.002"/>
<dbReference type="GlyCosmos" id="Q9QWE9">
    <property type="glycosylation" value="8 sites, No reported glycans"/>
</dbReference>
<dbReference type="GlyGen" id="Q9QWE9">
    <property type="glycosylation" value="8 sites"/>
</dbReference>
<dbReference type="iPTMnet" id="Q9QWE9"/>
<dbReference type="PhosphoSitePlus" id="Q9QWE9"/>
<dbReference type="SwissPalm" id="Q9QWE9"/>
<dbReference type="Ensembl" id="ENSRNOT00000093720.2">
    <property type="protein sequence ID" value="ENSRNOP00000076334.2"/>
    <property type="gene ID" value="ENSRNOG00000062276.2"/>
</dbReference>
<dbReference type="GeneID" id="29566"/>
<dbReference type="KEGG" id="rno:29566"/>
<dbReference type="AGR" id="RGD:2684"/>
<dbReference type="CTD" id="2687"/>
<dbReference type="RGD" id="2684">
    <property type="gene designation" value="Ggt5"/>
</dbReference>
<dbReference type="GeneTree" id="ENSGT00940000155794"/>
<dbReference type="InParanoid" id="Q9QWE9"/>
<dbReference type="OMA" id="ICGMGPP"/>
<dbReference type="OrthoDB" id="1081007at2759"/>
<dbReference type="PhylomeDB" id="Q9QWE9"/>
<dbReference type="Reactome" id="R-RNO-174403">
    <property type="pathway name" value="Glutathione synthesis and recycling"/>
</dbReference>
<dbReference type="Reactome" id="R-RNO-2142691">
    <property type="pathway name" value="Synthesis of Leukotrienes (LT) and Eoxins (EX)"/>
</dbReference>
<dbReference type="Reactome" id="R-RNO-5423646">
    <property type="pathway name" value="Aflatoxin activation and detoxification"/>
</dbReference>
<dbReference type="Reactome" id="R-RNO-9753281">
    <property type="pathway name" value="Paracetamol ADME"/>
</dbReference>
<dbReference type="UniPathway" id="UPA00204"/>
<dbReference type="UniPathway" id="UPA00880"/>
<dbReference type="PRO" id="PR:Q9QWE9"/>
<dbReference type="Proteomes" id="UP000002494">
    <property type="component" value="Chromosome 20"/>
</dbReference>
<dbReference type="GO" id="GO:0005886">
    <property type="term" value="C:plasma membrane"/>
    <property type="evidence" value="ECO:0000250"/>
    <property type="project" value="UniProtKB"/>
</dbReference>
<dbReference type="GO" id="GO:0036374">
    <property type="term" value="F:glutathione hydrolase activity"/>
    <property type="evidence" value="ECO:0000266"/>
    <property type="project" value="RGD"/>
</dbReference>
<dbReference type="GO" id="GO:0103068">
    <property type="term" value="F:leukotriene C4 gamma-glutamyl transferase activity"/>
    <property type="evidence" value="ECO:0007669"/>
    <property type="project" value="UniProtKB-EC"/>
</dbReference>
<dbReference type="GO" id="GO:0002951">
    <property type="term" value="F:leukotriene-C(4) hydrolase"/>
    <property type="evidence" value="ECO:0000250"/>
    <property type="project" value="UniProtKB"/>
</dbReference>
<dbReference type="GO" id="GO:0000048">
    <property type="term" value="F:peptidyltransferase activity"/>
    <property type="evidence" value="ECO:0000250"/>
    <property type="project" value="UniProtKB"/>
</dbReference>
<dbReference type="GO" id="GO:0006520">
    <property type="term" value="P:amino acid metabolic process"/>
    <property type="evidence" value="ECO:0000266"/>
    <property type="project" value="RGD"/>
</dbReference>
<dbReference type="GO" id="GO:0006631">
    <property type="term" value="P:fatty acid metabolic process"/>
    <property type="evidence" value="ECO:0000266"/>
    <property type="project" value="RGD"/>
</dbReference>
<dbReference type="GO" id="GO:0006750">
    <property type="term" value="P:glutathione biosynthetic process"/>
    <property type="evidence" value="ECO:0007669"/>
    <property type="project" value="UniProtKB-KW"/>
</dbReference>
<dbReference type="GO" id="GO:0006751">
    <property type="term" value="P:glutathione catabolic process"/>
    <property type="evidence" value="ECO:0000250"/>
    <property type="project" value="UniProtKB"/>
</dbReference>
<dbReference type="GO" id="GO:0006954">
    <property type="term" value="P:inflammatory response"/>
    <property type="evidence" value="ECO:0000266"/>
    <property type="project" value="RGD"/>
</dbReference>
<dbReference type="GO" id="GO:1901750">
    <property type="term" value="P:leukotriene D4 biosynthetic process"/>
    <property type="evidence" value="ECO:0000250"/>
    <property type="project" value="UniProtKB"/>
</dbReference>
<dbReference type="GO" id="GO:0006508">
    <property type="term" value="P:proteolysis"/>
    <property type="evidence" value="ECO:0000266"/>
    <property type="project" value="RGD"/>
</dbReference>
<dbReference type="GO" id="GO:0006979">
    <property type="term" value="P:response to oxidative stress"/>
    <property type="evidence" value="ECO:0000304"/>
    <property type="project" value="RGD"/>
</dbReference>
<dbReference type="FunFam" id="1.10.246.130:FF:000001">
    <property type="entry name" value="Gamma-glutamyltransferase 5 isoform 1"/>
    <property type="match status" value="1"/>
</dbReference>
<dbReference type="FunFam" id="3.60.20.40:FF:000005">
    <property type="entry name" value="gamma-glutamyltransferase 5 isoform X3"/>
    <property type="match status" value="1"/>
</dbReference>
<dbReference type="Gene3D" id="1.10.246.130">
    <property type="match status" value="1"/>
</dbReference>
<dbReference type="Gene3D" id="3.60.20.40">
    <property type="match status" value="1"/>
</dbReference>
<dbReference type="InterPro" id="IPR055262">
    <property type="entry name" value="GGT_CS"/>
</dbReference>
<dbReference type="InterPro" id="IPR043138">
    <property type="entry name" value="GGT_lsub_C"/>
</dbReference>
<dbReference type="InterPro" id="IPR000101">
    <property type="entry name" value="GGT_peptidase"/>
</dbReference>
<dbReference type="InterPro" id="IPR043137">
    <property type="entry name" value="GGT_ssub"/>
</dbReference>
<dbReference type="InterPro" id="IPR029055">
    <property type="entry name" value="Ntn_hydrolases_N"/>
</dbReference>
<dbReference type="PANTHER" id="PTHR45027:SF2">
    <property type="entry name" value="GAMMA-GLUTAMYLTRANSFERASE 5"/>
    <property type="match status" value="1"/>
</dbReference>
<dbReference type="PANTHER" id="PTHR45027">
    <property type="entry name" value="PUTATIVE GLUTATHIONE HYDROLASE LIGHT CHAIN"/>
    <property type="match status" value="1"/>
</dbReference>
<dbReference type="Pfam" id="PF01019">
    <property type="entry name" value="G_glu_transpept"/>
    <property type="match status" value="1"/>
</dbReference>
<dbReference type="PRINTS" id="PR01210">
    <property type="entry name" value="GGTRANSPTASE"/>
</dbReference>
<dbReference type="SUPFAM" id="SSF56235">
    <property type="entry name" value="N-terminal nucleophile aminohydrolases (Ntn hydrolases)"/>
    <property type="match status" value="1"/>
</dbReference>
<dbReference type="PROSITE" id="PS00462">
    <property type="entry name" value="G_GLU_TRANSPEPTIDASE"/>
    <property type="match status" value="1"/>
</dbReference>
<feature type="chain" id="PRO_0000011076" description="Glutathione hydrolase 5 heavy chain" evidence="1">
    <location>
        <begin position="1"/>
        <end position="387"/>
    </location>
</feature>
<feature type="chain" id="PRO_0000011077" description="Glutathione hydrolase 5 light chain" evidence="1">
    <location>
        <begin position="388"/>
        <end position="572"/>
    </location>
</feature>
<feature type="topological domain" description="Cytoplasmic" evidence="3">
    <location>
        <begin position="1"/>
        <end position="6"/>
    </location>
</feature>
<feature type="transmembrane region" description="Helical; Signal-anchor for type II membrane protein" evidence="3">
    <location>
        <begin position="7"/>
        <end position="29"/>
    </location>
</feature>
<feature type="topological domain" description="Extracellular" evidence="3">
    <location>
        <begin position="30"/>
        <end position="572"/>
    </location>
</feature>
<feature type="active site" description="Nucleophile" evidence="1">
    <location>
        <position position="388"/>
    </location>
</feature>
<feature type="binding site" evidence="1">
    <location>
        <position position="110"/>
    </location>
    <ligand>
        <name>L-glutamate</name>
        <dbReference type="ChEBI" id="CHEBI:29985"/>
    </ligand>
</feature>
<feature type="binding site" evidence="1">
    <location>
        <position position="406"/>
    </location>
    <ligand>
        <name>L-glutamate</name>
        <dbReference type="ChEBI" id="CHEBI:29985"/>
    </ligand>
</feature>
<feature type="binding site" evidence="1">
    <location>
        <position position="427"/>
    </location>
    <ligand>
        <name>L-glutamate</name>
        <dbReference type="ChEBI" id="CHEBI:29985"/>
    </ligand>
</feature>
<feature type="binding site" evidence="1">
    <location>
        <begin position="453"/>
        <end position="454"/>
    </location>
    <ligand>
        <name>L-glutamate</name>
        <dbReference type="ChEBI" id="CHEBI:29985"/>
    </ligand>
</feature>
<feature type="glycosylation site" description="N-linked (GlcNAc...) asparagine" evidence="4">
    <location>
        <position position="98"/>
    </location>
</feature>
<feature type="glycosylation site" description="N-linked (GlcNAc...) asparagine" evidence="4">
    <location>
        <position position="185"/>
    </location>
</feature>
<feature type="glycosylation site" description="N-linked (GlcNAc...) asparagine" evidence="4">
    <location>
        <position position="194"/>
    </location>
</feature>
<feature type="glycosylation site" description="N-linked (GlcNAc...) asparagine" evidence="4">
    <location>
        <position position="204"/>
    </location>
</feature>
<feature type="glycosylation site" description="N-linked (GlcNAc...) asparagine" evidence="4">
    <location>
        <position position="277"/>
    </location>
</feature>
<feature type="glycosylation site" description="N-linked (GlcNAc...) asparagine" evidence="4">
    <location>
        <position position="303"/>
    </location>
</feature>
<feature type="glycosylation site" description="N-linked (GlcNAc...) asparagine" evidence="4">
    <location>
        <position position="347"/>
    </location>
</feature>
<feature type="glycosylation site" description="N-linked (GlcNAc...) asparagine" evidence="4">
    <location>
        <position position="377"/>
    </location>
</feature>
<feature type="sequence conflict" description="In Ref. 1; AAC23546." ref="1">
    <original>Q</original>
    <variation>H</variation>
    <location>
        <position position="200"/>
    </location>
</feature>
<feature type="sequence conflict" description="In Ref. 1; AAC23546." ref="1">
    <original>A</original>
    <variation>T</variation>
    <location>
        <position position="325"/>
    </location>
</feature>
<name>GGT5_RAT</name>
<protein>
    <recommendedName>
        <fullName>Glutathione hydrolase 5 proenzyme</fullName>
        <ecNumber evidence="1">3.4.19.13</ecNumber>
    </recommendedName>
    <alternativeName>
        <fullName>Gamma-glutamyl leukotrienase</fullName>
        <shortName>GGL</shortName>
    </alternativeName>
    <alternativeName>
        <fullName>Gamma-glutamyl transpeptidase-related enzyme</fullName>
        <shortName>GGT-rel</shortName>
    </alternativeName>
    <alternativeName>
        <fullName>Gamma-glutamyltransferase 5</fullName>
        <shortName>GGT 5</shortName>
        <ecNumber evidence="1">2.3.2.2</ecNumber>
    </alternativeName>
    <alternativeName>
        <fullName>Gamma-glutamyltransferase-like activity 1</fullName>
    </alternativeName>
    <alternativeName>
        <fullName>Gamma-glutamyltranspeptidase 5</fullName>
    </alternativeName>
    <alternativeName>
        <fullName>Leukotriene-C4 hydrolase</fullName>
        <ecNumber evidence="1">3.4.19.14</ecNumber>
    </alternativeName>
    <component>
        <recommendedName>
            <fullName>Glutathione hydrolase 5 heavy chain</fullName>
        </recommendedName>
    </component>
    <component>
        <recommendedName>
            <fullName>Glutathione hydrolase 5 light chain</fullName>
        </recommendedName>
    </component>
</protein>
<reference key="1">
    <citation type="journal article" date="1997" name="Am. J. Physiol.">
        <title>Expression and regulation of gamma-glutamyl transpeptidase-related enzyme in tracheal cells.</title>
        <authorList>
            <person name="Potdar P.D."/>
            <person name="Andrews K.L."/>
            <person name="Nettesheim P."/>
            <person name="Ostrowski L.E."/>
        </authorList>
    </citation>
    <scope>NUCLEOTIDE SEQUENCE [MRNA]</scope>
    <scope>TISSUE SPECIFICITY</scope>
    <source>
        <strain>Fischer 344/N</strain>
        <tissue>Trachea</tissue>
    </source>
</reference>
<reference key="2">
    <citation type="journal article" date="2004" name="Genome Res.">
        <title>The status, quality, and expansion of the NIH full-length cDNA project: the Mammalian Gene Collection (MGC).</title>
        <authorList>
            <consortium name="The MGC Project Team"/>
        </authorList>
    </citation>
    <scope>NUCLEOTIDE SEQUENCE [LARGE SCALE MRNA]</scope>
    <source>
        <tissue>Heart</tissue>
    </source>
</reference>
<keyword id="KW-0012">Acyltransferase</keyword>
<keyword id="KW-0317">Glutathione biosynthesis</keyword>
<keyword id="KW-0325">Glycoprotein</keyword>
<keyword id="KW-0378">Hydrolase</keyword>
<keyword id="KW-0434">Leukotriene biosynthesis</keyword>
<keyword id="KW-0472">Membrane</keyword>
<keyword id="KW-0645">Protease</keyword>
<keyword id="KW-1185">Reference proteome</keyword>
<keyword id="KW-0735">Signal-anchor</keyword>
<keyword id="KW-0808">Transferase</keyword>
<keyword id="KW-0812">Transmembrane</keyword>
<keyword id="KW-1133">Transmembrane helix</keyword>
<keyword id="KW-0865">Zymogen</keyword>
<organism>
    <name type="scientific">Rattus norvegicus</name>
    <name type="common">Rat</name>
    <dbReference type="NCBI Taxonomy" id="10116"/>
    <lineage>
        <taxon>Eukaryota</taxon>
        <taxon>Metazoa</taxon>
        <taxon>Chordata</taxon>
        <taxon>Craniata</taxon>
        <taxon>Vertebrata</taxon>
        <taxon>Euteleostomi</taxon>
        <taxon>Mammalia</taxon>
        <taxon>Eutheria</taxon>
        <taxon>Euarchontoglires</taxon>
        <taxon>Glires</taxon>
        <taxon>Rodentia</taxon>
        <taxon>Myomorpha</taxon>
        <taxon>Muroidea</taxon>
        <taxon>Muridae</taxon>
        <taxon>Murinae</taxon>
        <taxon>Rattus</taxon>
    </lineage>
</organism>
<accession>Q9QWE9</accession>
<accession>Q5PQV0</accession>
<gene>
    <name type="primary">Ggt5</name>
    <name type="synonym">Ggtla1</name>
</gene>
<sequence>MAWGHRTTVCLVLLGVSLGLAIIVLAVVLPHHQASCRPDAFTRAAVAADSKICSDIGRVILQQQGSPVDAAIAALICTGVVNPQSMGLGGGVVFTIYNASTGKVEVINARETVPASHDQRLLDQCTNALPLCTGAQWIGVPGELRGYAEAHRRYGRLPWAQLFQPTIALLREGFRVPPILSQFLNTSFLQPCLNSSTLRQLFFNGTETLRSQDPLPWPALANTLETVAKEGAEVLYTGKLGQTLVEDIAWQGSQLTVQDLAAFRPKVVEPLEMALGNYTLYSPPPPAGGAILSFILNVLKGFNFSAETVAGPEGKVNMYHHLVEALKFAVGQRWRLWDPYSHPGIQNISQDLLRETLAQHIRQQIDGRGDHQLSHYNLSGVRGNSMGTSHVSVLGEDGSAVAATSTINTPFGAMVYSPRTGILLNNELLDLCWRHKPGSTVTPPPVPGEQPPSSMVPSILINEVQGSKLVIGGAGGELIISAVTQAIVNKLWLGFSLTDAIAAPILHVNSKGHVEYEPKFNQEVRKGLQDRGQSQSQSQRPVFLNSVQAVFQEGPCVYAASDLRKAGKASGY</sequence>
<comment type="function">
    <text evidence="2 3">Cleaves the gamma-glutamyl bond of extracellular glutathione tripeptide (gamma-Glu-Cys-Gly) and certain glutathione conjugates (By similarity). Hydrolyzes glutathione releasing L-Glu and Cys-Gly dipeptide which is further metabolized to maintain extracellular cysteine levels but also to provide cysteine necessary for intracellular glutathione synthesis (By similarity). Among glutathione-S-conjugates metabolizes leukotriene C4 (LTC4) and S-geranylgeranyl-glutathione (GGG), but is inactive toward gamma-glutamyl leucine. Converts extracellular LTC4 to LTD4 during acute inflammatory response. Acts as a negative regulator of GGG bioactivity. GGT5 (via GGG catabolism) and ABCC1 (via extracellular transport) establish GGG gradients within lymphoid tissues to position P2RY8-positive lymphocytes at germinal centers in lymphoid follicles and restrict their chemotactic transmigration from blood vessels to bone marrow parenchyma (By similarity). The transpeptidation reaction, i.e. the transfer of gamma-glutamyl moiety to an acceptor molecule to yield a new gamma-glutamyl compound requires high concentration of dipeptide acceptor and is considered nonphysiological (By similarity).</text>
</comment>
<comment type="catalytic activity">
    <reaction evidence="2">
        <text>glutathione + H2O = L-cysteinylglycine + L-glutamate</text>
        <dbReference type="Rhea" id="RHEA:28807"/>
        <dbReference type="ChEBI" id="CHEBI:15377"/>
        <dbReference type="ChEBI" id="CHEBI:29985"/>
        <dbReference type="ChEBI" id="CHEBI:57925"/>
        <dbReference type="ChEBI" id="CHEBI:61694"/>
        <dbReference type="EC" id="3.4.19.13"/>
    </reaction>
    <physiologicalReaction direction="left-to-right" evidence="2">
        <dbReference type="Rhea" id="RHEA:28808"/>
    </physiologicalReaction>
</comment>
<comment type="catalytic activity">
    <reaction evidence="2">
        <text>an S-substituted glutathione + H2O = an S-substituted L-cysteinylglycine + L-glutamate</text>
        <dbReference type="Rhea" id="RHEA:59468"/>
        <dbReference type="ChEBI" id="CHEBI:15377"/>
        <dbReference type="ChEBI" id="CHEBI:29985"/>
        <dbReference type="ChEBI" id="CHEBI:90779"/>
        <dbReference type="ChEBI" id="CHEBI:143103"/>
        <dbReference type="EC" id="3.4.19.13"/>
    </reaction>
    <physiologicalReaction direction="left-to-right" evidence="2">
        <dbReference type="Rhea" id="RHEA:59469"/>
    </physiologicalReaction>
</comment>
<comment type="catalytic activity">
    <reaction evidence="2">
        <text>leukotriene C4 + H2O = leukotriene D4 + L-glutamate</text>
        <dbReference type="Rhea" id="RHEA:31563"/>
        <dbReference type="ChEBI" id="CHEBI:15377"/>
        <dbReference type="ChEBI" id="CHEBI:29985"/>
        <dbReference type="ChEBI" id="CHEBI:57973"/>
        <dbReference type="ChEBI" id="CHEBI:63166"/>
        <dbReference type="EC" id="3.4.19.14"/>
    </reaction>
    <physiologicalReaction direction="left-to-right" evidence="2">
        <dbReference type="Rhea" id="RHEA:31564"/>
    </physiologicalReaction>
</comment>
<comment type="catalytic activity">
    <reaction evidence="2">
        <text>S-[(2E,6E,10E)-geranylgeranyl]-L-glutathione + H2O = S-[(2E,6E,10E)-geranylgeranyl]-L-cysteinylglycine + L-glutamate</text>
        <dbReference type="Rhea" id="RHEA:65120"/>
        <dbReference type="ChEBI" id="CHEBI:15377"/>
        <dbReference type="ChEBI" id="CHEBI:29985"/>
        <dbReference type="ChEBI" id="CHEBI:156326"/>
        <dbReference type="ChEBI" id="CHEBI:156330"/>
    </reaction>
    <physiologicalReaction direction="left-to-right" evidence="2">
        <dbReference type="Rhea" id="RHEA:65121"/>
    </physiologicalReaction>
</comment>
<comment type="catalytic activity">
    <reaction evidence="2">
        <text>an N-terminal (5-L-glutamyl)-[peptide] + an alpha-amino acid = 5-L-glutamyl amino acid + an N-terminal L-alpha-aminoacyl-[peptide]</text>
        <dbReference type="Rhea" id="RHEA:23904"/>
        <dbReference type="Rhea" id="RHEA-COMP:9780"/>
        <dbReference type="Rhea" id="RHEA-COMP:9795"/>
        <dbReference type="ChEBI" id="CHEBI:77644"/>
        <dbReference type="ChEBI" id="CHEBI:78597"/>
        <dbReference type="ChEBI" id="CHEBI:78599"/>
        <dbReference type="ChEBI" id="CHEBI:78608"/>
        <dbReference type="EC" id="2.3.2.2"/>
    </reaction>
    <physiologicalReaction direction="left-to-right" evidence="2">
        <dbReference type="Rhea" id="RHEA:23905"/>
    </physiologicalReaction>
</comment>
<comment type="activity regulation">
    <text evidence="2">Inhibited by serine-borate.</text>
</comment>
<comment type="pathway">
    <text evidence="3">Lipid metabolism; leukotriene D4 biosynthesis.</text>
</comment>
<comment type="pathway">
    <text evidence="2">Sulfur metabolism; glutathione metabolism.</text>
</comment>
<comment type="subunit">
    <text evidence="3">Heterodimer composed of the light and heavy chains. The active site is located in the light chain.</text>
</comment>
<comment type="subcellular location">
    <subcellularLocation>
        <location evidence="3">Membrane</location>
        <topology evidence="3">Single-pass type II membrane protein</topology>
    </subcellularLocation>
</comment>
<comment type="tissue specificity">
    <text evidence="5">Widely expressed, but at low level, except in the airway epithelial cells. Detected in brain, heart, kidney, liver, lung, spleen, testis and trachea.</text>
</comment>
<comment type="PTM">
    <text evidence="1">Cleaved by autocatalysis into a large and a small subunit.</text>
</comment>
<comment type="PTM">
    <text evidence="3">Glycosylated.</text>
</comment>
<comment type="miscellaneous">
    <text evidence="2 3">A previous study reported that GSH and oxidized glutathione (GSSG) are not substrates for murine GGT5 (By similarity). However, this result contrasts with two studies reported that GSH is indeed a substrate for GGT5 (By similarity).</text>
</comment>
<comment type="similarity">
    <text evidence="6">Belongs to the gamma-glutamyltransferase family.</text>
</comment>